<dbReference type="EC" id="1.2.1.72" evidence="1"/>
<dbReference type="EMBL" id="CU928163">
    <property type="protein sequence ID" value="CAR14435.1"/>
    <property type="molecule type" value="Genomic_DNA"/>
</dbReference>
<dbReference type="RefSeq" id="WP_000218480.1">
    <property type="nucleotide sequence ID" value="NC_011751.1"/>
</dbReference>
<dbReference type="RefSeq" id="YP_002413954.1">
    <property type="nucleotide sequence ID" value="NC_011751.1"/>
</dbReference>
<dbReference type="SMR" id="B7N7H3"/>
<dbReference type="STRING" id="585056.ECUMN_3272"/>
<dbReference type="GeneID" id="93779071"/>
<dbReference type="KEGG" id="eum:ECUMN_3272"/>
<dbReference type="PATRIC" id="fig|585056.7.peg.3450"/>
<dbReference type="HOGENOM" id="CLU_030140_0_2_6"/>
<dbReference type="UniPathway" id="UPA00244">
    <property type="reaction ID" value="UER00309"/>
</dbReference>
<dbReference type="Proteomes" id="UP000007097">
    <property type="component" value="Chromosome"/>
</dbReference>
<dbReference type="GO" id="GO:0005737">
    <property type="term" value="C:cytoplasm"/>
    <property type="evidence" value="ECO:0007669"/>
    <property type="project" value="UniProtKB-SubCell"/>
</dbReference>
<dbReference type="GO" id="GO:0048001">
    <property type="term" value="F:erythrose-4-phosphate dehydrogenase activity"/>
    <property type="evidence" value="ECO:0007669"/>
    <property type="project" value="UniProtKB-UniRule"/>
</dbReference>
<dbReference type="GO" id="GO:0051287">
    <property type="term" value="F:NAD binding"/>
    <property type="evidence" value="ECO:0007669"/>
    <property type="project" value="InterPro"/>
</dbReference>
<dbReference type="GO" id="GO:0042823">
    <property type="term" value="P:pyridoxal phosphate biosynthetic process"/>
    <property type="evidence" value="ECO:0007669"/>
    <property type="project" value="UniProtKB-UniRule"/>
</dbReference>
<dbReference type="GO" id="GO:0008615">
    <property type="term" value="P:pyridoxine biosynthetic process"/>
    <property type="evidence" value="ECO:0007669"/>
    <property type="project" value="UniProtKB-UniRule"/>
</dbReference>
<dbReference type="CDD" id="cd23937">
    <property type="entry name" value="GAPDH_C_E4PDH"/>
    <property type="match status" value="1"/>
</dbReference>
<dbReference type="CDD" id="cd17892">
    <property type="entry name" value="GAPDH_N_E4PDH"/>
    <property type="match status" value="1"/>
</dbReference>
<dbReference type="FunFam" id="3.30.360.10:FF:000007">
    <property type="entry name" value="D-erythrose-4-phosphate dehydrogenase"/>
    <property type="match status" value="1"/>
</dbReference>
<dbReference type="FunFam" id="3.40.50.720:FF:000001">
    <property type="entry name" value="Glyceraldehyde-3-phosphate dehydrogenase"/>
    <property type="match status" value="1"/>
</dbReference>
<dbReference type="Gene3D" id="3.30.360.10">
    <property type="entry name" value="Dihydrodipicolinate Reductase, domain 2"/>
    <property type="match status" value="1"/>
</dbReference>
<dbReference type="Gene3D" id="3.40.50.720">
    <property type="entry name" value="NAD(P)-binding Rossmann-like Domain"/>
    <property type="match status" value="1"/>
</dbReference>
<dbReference type="HAMAP" id="MF_01640">
    <property type="entry name" value="E4P_dehydrog"/>
    <property type="match status" value="1"/>
</dbReference>
<dbReference type="InterPro" id="IPR006422">
    <property type="entry name" value="E4P_DH_bac"/>
</dbReference>
<dbReference type="InterPro" id="IPR020831">
    <property type="entry name" value="GlycerAld/Erythrose_P_DH"/>
</dbReference>
<dbReference type="InterPro" id="IPR020830">
    <property type="entry name" value="GlycerAld_3-P_DH_AS"/>
</dbReference>
<dbReference type="InterPro" id="IPR020829">
    <property type="entry name" value="GlycerAld_3-P_DH_cat"/>
</dbReference>
<dbReference type="InterPro" id="IPR020828">
    <property type="entry name" value="GlycerAld_3-P_DH_NAD(P)-bd"/>
</dbReference>
<dbReference type="InterPro" id="IPR036291">
    <property type="entry name" value="NAD(P)-bd_dom_sf"/>
</dbReference>
<dbReference type="NCBIfam" id="TIGR01532">
    <property type="entry name" value="E4PD_g-proteo"/>
    <property type="match status" value="1"/>
</dbReference>
<dbReference type="NCBIfam" id="NF010058">
    <property type="entry name" value="PRK13535.1"/>
    <property type="match status" value="1"/>
</dbReference>
<dbReference type="PANTHER" id="PTHR43148">
    <property type="entry name" value="GLYCERALDEHYDE-3-PHOSPHATE DEHYDROGENASE 2"/>
    <property type="match status" value="1"/>
</dbReference>
<dbReference type="Pfam" id="PF02800">
    <property type="entry name" value="Gp_dh_C"/>
    <property type="match status" value="1"/>
</dbReference>
<dbReference type="Pfam" id="PF00044">
    <property type="entry name" value="Gp_dh_N"/>
    <property type="match status" value="1"/>
</dbReference>
<dbReference type="PIRSF" id="PIRSF000149">
    <property type="entry name" value="GAP_DH"/>
    <property type="match status" value="1"/>
</dbReference>
<dbReference type="PRINTS" id="PR00078">
    <property type="entry name" value="G3PDHDRGNASE"/>
</dbReference>
<dbReference type="SMART" id="SM00846">
    <property type="entry name" value="Gp_dh_N"/>
    <property type="match status" value="1"/>
</dbReference>
<dbReference type="SUPFAM" id="SSF55347">
    <property type="entry name" value="Glyceraldehyde-3-phosphate dehydrogenase-like, C-terminal domain"/>
    <property type="match status" value="1"/>
</dbReference>
<dbReference type="SUPFAM" id="SSF51735">
    <property type="entry name" value="NAD(P)-binding Rossmann-fold domains"/>
    <property type="match status" value="1"/>
</dbReference>
<dbReference type="PROSITE" id="PS00071">
    <property type="entry name" value="GAPDH"/>
    <property type="match status" value="1"/>
</dbReference>
<feature type="chain" id="PRO_1000186825" description="D-erythrose-4-phosphate dehydrogenase">
    <location>
        <begin position="1"/>
        <end position="339"/>
    </location>
</feature>
<feature type="active site" description="Nucleophile" evidence="1">
    <location>
        <position position="155"/>
    </location>
</feature>
<feature type="binding site" evidence="1">
    <location>
        <begin position="12"/>
        <end position="13"/>
    </location>
    <ligand>
        <name>NAD(+)</name>
        <dbReference type="ChEBI" id="CHEBI:57540"/>
    </ligand>
</feature>
<feature type="binding site" evidence="1">
    <location>
        <position position="81"/>
    </location>
    <ligand>
        <name>NAD(+)</name>
        <dbReference type="ChEBI" id="CHEBI:57540"/>
    </ligand>
</feature>
<feature type="binding site" evidence="1">
    <location>
        <begin position="154"/>
        <end position="156"/>
    </location>
    <ligand>
        <name>substrate</name>
    </ligand>
</feature>
<feature type="binding site" evidence="1">
    <location>
        <position position="200"/>
    </location>
    <ligand>
        <name>substrate</name>
    </ligand>
</feature>
<feature type="binding site" evidence="1">
    <location>
        <begin position="213"/>
        <end position="214"/>
    </location>
    <ligand>
        <name>substrate</name>
    </ligand>
</feature>
<feature type="binding site" evidence="1">
    <location>
        <position position="236"/>
    </location>
    <ligand>
        <name>substrate</name>
    </ligand>
</feature>
<feature type="binding site" evidence="1">
    <location>
        <position position="318"/>
    </location>
    <ligand>
        <name>NAD(+)</name>
        <dbReference type="ChEBI" id="CHEBI:57540"/>
    </ligand>
</feature>
<feature type="site" description="Activates thiol group during catalysis" evidence="1">
    <location>
        <position position="182"/>
    </location>
</feature>
<gene>
    <name evidence="1" type="primary">epd</name>
    <name type="ordered locus">ECUMN_3272</name>
</gene>
<proteinExistence type="inferred from homology"/>
<keyword id="KW-0963">Cytoplasm</keyword>
<keyword id="KW-0520">NAD</keyword>
<keyword id="KW-0560">Oxidoreductase</keyword>
<keyword id="KW-0664">Pyridoxine biosynthesis</keyword>
<evidence type="ECO:0000255" key="1">
    <source>
        <dbReference type="HAMAP-Rule" id="MF_01640"/>
    </source>
</evidence>
<reference key="1">
    <citation type="journal article" date="2009" name="PLoS Genet.">
        <title>Organised genome dynamics in the Escherichia coli species results in highly diverse adaptive paths.</title>
        <authorList>
            <person name="Touchon M."/>
            <person name="Hoede C."/>
            <person name="Tenaillon O."/>
            <person name="Barbe V."/>
            <person name="Baeriswyl S."/>
            <person name="Bidet P."/>
            <person name="Bingen E."/>
            <person name="Bonacorsi S."/>
            <person name="Bouchier C."/>
            <person name="Bouvet O."/>
            <person name="Calteau A."/>
            <person name="Chiapello H."/>
            <person name="Clermont O."/>
            <person name="Cruveiller S."/>
            <person name="Danchin A."/>
            <person name="Diard M."/>
            <person name="Dossat C."/>
            <person name="Karoui M.E."/>
            <person name="Frapy E."/>
            <person name="Garry L."/>
            <person name="Ghigo J.M."/>
            <person name="Gilles A.M."/>
            <person name="Johnson J."/>
            <person name="Le Bouguenec C."/>
            <person name="Lescat M."/>
            <person name="Mangenot S."/>
            <person name="Martinez-Jehanne V."/>
            <person name="Matic I."/>
            <person name="Nassif X."/>
            <person name="Oztas S."/>
            <person name="Petit M.A."/>
            <person name="Pichon C."/>
            <person name="Rouy Z."/>
            <person name="Ruf C.S."/>
            <person name="Schneider D."/>
            <person name="Tourret J."/>
            <person name="Vacherie B."/>
            <person name="Vallenet D."/>
            <person name="Medigue C."/>
            <person name="Rocha E.P.C."/>
            <person name="Denamur E."/>
        </authorList>
    </citation>
    <scope>NUCLEOTIDE SEQUENCE [LARGE SCALE GENOMIC DNA]</scope>
    <source>
        <strain>UMN026 / ExPEC</strain>
    </source>
</reference>
<comment type="function">
    <text evidence="1">Catalyzes the NAD-dependent conversion of D-erythrose 4-phosphate to 4-phosphoerythronate.</text>
</comment>
<comment type="catalytic activity">
    <reaction evidence="1">
        <text>D-erythrose 4-phosphate + NAD(+) + H2O = 4-phospho-D-erythronate + NADH + 2 H(+)</text>
        <dbReference type="Rhea" id="RHEA:12056"/>
        <dbReference type="ChEBI" id="CHEBI:15377"/>
        <dbReference type="ChEBI" id="CHEBI:15378"/>
        <dbReference type="ChEBI" id="CHEBI:16897"/>
        <dbReference type="ChEBI" id="CHEBI:57540"/>
        <dbReference type="ChEBI" id="CHEBI:57945"/>
        <dbReference type="ChEBI" id="CHEBI:58766"/>
        <dbReference type="EC" id="1.2.1.72"/>
    </reaction>
</comment>
<comment type="pathway">
    <text evidence="1">Cofactor biosynthesis; pyridoxine 5'-phosphate biosynthesis; pyridoxine 5'-phosphate from D-erythrose 4-phosphate: step 1/5.</text>
</comment>
<comment type="subunit">
    <text evidence="1">Homotetramer.</text>
</comment>
<comment type="subcellular location">
    <subcellularLocation>
        <location evidence="1">Cytoplasm</location>
    </subcellularLocation>
</comment>
<comment type="similarity">
    <text evidence="1">Belongs to the glyceraldehyde-3-phosphate dehydrogenase family. Epd subfamily.</text>
</comment>
<accession>B7N7H3</accession>
<name>E4PD_ECOLU</name>
<protein>
    <recommendedName>
        <fullName evidence="1">D-erythrose-4-phosphate dehydrogenase</fullName>
        <shortName evidence="1">E4PDH</shortName>
        <ecNumber evidence="1">1.2.1.72</ecNumber>
    </recommendedName>
</protein>
<sequence length="339" mass="37299">MTVRVAINGFGRIGRNVVRALYESGRRAEITVVAINELADAAGMAHLLKYDTSHGRFAWEVRQERDQLFVGDDAIRVLHERSLQSLPWRELGVDVVLDCTGVYGSREHGEAHIAAGAKKVLFSHPGSNDLDATVVYGVNQDQLRAEHRIVSNASCTTNCIIPVIKLLDDAYGIESGTVTTIHSAMHDQQVIDAYHPDLRRTRAASQSIIPVDTKLAAGITRFFPQFNDRFEAIAVRVPTINVTAIDLSVTVKKPVKANEVNLLLQKAAQGAFHGIVDYTELPLVSVDFNHDPHSAIVDGTQTRVSGAHLIKTLVWCDNEWGFANRMLDTTLAMATVAFR</sequence>
<organism>
    <name type="scientific">Escherichia coli O17:K52:H18 (strain UMN026 / ExPEC)</name>
    <dbReference type="NCBI Taxonomy" id="585056"/>
    <lineage>
        <taxon>Bacteria</taxon>
        <taxon>Pseudomonadati</taxon>
        <taxon>Pseudomonadota</taxon>
        <taxon>Gammaproteobacteria</taxon>
        <taxon>Enterobacterales</taxon>
        <taxon>Enterobacteriaceae</taxon>
        <taxon>Escherichia</taxon>
    </lineage>
</organism>